<organism>
    <name type="scientific">Salmonella dublin (strain CT_02021853)</name>
    <dbReference type="NCBI Taxonomy" id="439851"/>
    <lineage>
        <taxon>Bacteria</taxon>
        <taxon>Pseudomonadati</taxon>
        <taxon>Pseudomonadota</taxon>
        <taxon>Gammaproteobacteria</taxon>
        <taxon>Enterobacterales</taxon>
        <taxon>Enterobacteriaceae</taxon>
        <taxon>Salmonella</taxon>
    </lineage>
</organism>
<keyword id="KW-0068">Autocatalytic cleavage</keyword>
<keyword id="KW-0227">DNA damage</keyword>
<keyword id="KW-0234">DNA repair</keyword>
<keyword id="KW-0235">DNA replication</keyword>
<keyword id="KW-0238">DNA-binding</keyword>
<keyword id="KW-0378">Hydrolase</keyword>
<keyword id="KW-0678">Repressor</keyword>
<keyword id="KW-0742">SOS response</keyword>
<keyword id="KW-0804">Transcription</keyword>
<keyword id="KW-0805">Transcription regulation</keyword>
<dbReference type="EC" id="3.4.21.88" evidence="1"/>
<dbReference type="EMBL" id="CP001144">
    <property type="protein sequence ID" value="ACH76845.1"/>
    <property type="molecule type" value="Genomic_DNA"/>
</dbReference>
<dbReference type="RefSeq" id="WP_000646079.1">
    <property type="nucleotide sequence ID" value="NC_011205.1"/>
</dbReference>
<dbReference type="SMR" id="B5FQR1"/>
<dbReference type="MEROPS" id="S24.001"/>
<dbReference type="KEGG" id="sed:SeD_A4631"/>
<dbReference type="HOGENOM" id="CLU_066192_45_3_6"/>
<dbReference type="Proteomes" id="UP000008322">
    <property type="component" value="Chromosome"/>
</dbReference>
<dbReference type="GO" id="GO:0003677">
    <property type="term" value="F:DNA binding"/>
    <property type="evidence" value="ECO:0007669"/>
    <property type="project" value="UniProtKB-UniRule"/>
</dbReference>
<dbReference type="GO" id="GO:0004252">
    <property type="term" value="F:serine-type endopeptidase activity"/>
    <property type="evidence" value="ECO:0007669"/>
    <property type="project" value="UniProtKB-UniRule"/>
</dbReference>
<dbReference type="GO" id="GO:0006281">
    <property type="term" value="P:DNA repair"/>
    <property type="evidence" value="ECO:0007669"/>
    <property type="project" value="UniProtKB-UniRule"/>
</dbReference>
<dbReference type="GO" id="GO:0006260">
    <property type="term" value="P:DNA replication"/>
    <property type="evidence" value="ECO:0007669"/>
    <property type="project" value="UniProtKB-UniRule"/>
</dbReference>
<dbReference type="GO" id="GO:0045892">
    <property type="term" value="P:negative regulation of DNA-templated transcription"/>
    <property type="evidence" value="ECO:0007669"/>
    <property type="project" value="UniProtKB-UniRule"/>
</dbReference>
<dbReference type="GO" id="GO:0006508">
    <property type="term" value="P:proteolysis"/>
    <property type="evidence" value="ECO:0007669"/>
    <property type="project" value="InterPro"/>
</dbReference>
<dbReference type="GO" id="GO:0009432">
    <property type="term" value="P:SOS response"/>
    <property type="evidence" value="ECO:0007669"/>
    <property type="project" value="UniProtKB-UniRule"/>
</dbReference>
<dbReference type="CDD" id="cd06529">
    <property type="entry name" value="S24_LexA-like"/>
    <property type="match status" value="1"/>
</dbReference>
<dbReference type="FunFam" id="1.10.10.10:FF:000009">
    <property type="entry name" value="LexA repressor"/>
    <property type="match status" value="1"/>
</dbReference>
<dbReference type="FunFam" id="2.10.109.10:FF:000001">
    <property type="entry name" value="LexA repressor"/>
    <property type="match status" value="1"/>
</dbReference>
<dbReference type="Gene3D" id="2.10.109.10">
    <property type="entry name" value="Umud Fragment, subunit A"/>
    <property type="match status" value="1"/>
</dbReference>
<dbReference type="Gene3D" id="1.10.10.10">
    <property type="entry name" value="Winged helix-like DNA-binding domain superfamily/Winged helix DNA-binding domain"/>
    <property type="match status" value="1"/>
</dbReference>
<dbReference type="HAMAP" id="MF_00015">
    <property type="entry name" value="LexA"/>
    <property type="match status" value="1"/>
</dbReference>
<dbReference type="InterPro" id="IPR006200">
    <property type="entry name" value="LexA"/>
</dbReference>
<dbReference type="InterPro" id="IPR039418">
    <property type="entry name" value="LexA-like"/>
</dbReference>
<dbReference type="InterPro" id="IPR036286">
    <property type="entry name" value="LexA/Signal_pep-like_sf"/>
</dbReference>
<dbReference type="InterPro" id="IPR006199">
    <property type="entry name" value="LexA_DNA-bd_dom"/>
</dbReference>
<dbReference type="InterPro" id="IPR050077">
    <property type="entry name" value="LexA_repressor"/>
</dbReference>
<dbReference type="InterPro" id="IPR006197">
    <property type="entry name" value="Peptidase_S24_LexA"/>
</dbReference>
<dbReference type="InterPro" id="IPR015927">
    <property type="entry name" value="Peptidase_S24_S26A/B/C"/>
</dbReference>
<dbReference type="InterPro" id="IPR036388">
    <property type="entry name" value="WH-like_DNA-bd_sf"/>
</dbReference>
<dbReference type="InterPro" id="IPR036390">
    <property type="entry name" value="WH_DNA-bd_sf"/>
</dbReference>
<dbReference type="NCBIfam" id="TIGR00498">
    <property type="entry name" value="lexA"/>
    <property type="match status" value="1"/>
</dbReference>
<dbReference type="PANTHER" id="PTHR33516">
    <property type="entry name" value="LEXA REPRESSOR"/>
    <property type="match status" value="1"/>
</dbReference>
<dbReference type="PANTHER" id="PTHR33516:SF2">
    <property type="entry name" value="LEXA REPRESSOR-RELATED"/>
    <property type="match status" value="1"/>
</dbReference>
<dbReference type="Pfam" id="PF01726">
    <property type="entry name" value="LexA_DNA_bind"/>
    <property type="match status" value="1"/>
</dbReference>
<dbReference type="Pfam" id="PF00717">
    <property type="entry name" value="Peptidase_S24"/>
    <property type="match status" value="1"/>
</dbReference>
<dbReference type="PRINTS" id="PR00726">
    <property type="entry name" value="LEXASERPTASE"/>
</dbReference>
<dbReference type="SUPFAM" id="SSF51306">
    <property type="entry name" value="LexA/Signal peptidase"/>
    <property type="match status" value="1"/>
</dbReference>
<dbReference type="SUPFAM" id="SSF46785">
    <property type="entry name" value="Winged helix' DNA-binding domain"/>
    <property type="match status" value="1"/>
</dbReference>
<proteinExistence type="inferred from homology"/>
<reference key="1">
    <citation type="journal article" date="2011" name="J. Bacteriol.">
        <title>Comparative genomics of 28 Salmonella enterica isolates: evidence for CRISPR-mediated adaptive sublineage evolution.</title>
        <authorList>
            <person name="Fricke W.F."/>
            <person name="Mammel M.K."/>
            <person name="McDermott P.F."/>
            <person name="Tartera C."/>
            <person name="White D.G."/>
            <person name="Leclerc J.E."/>
            <person name="Ravel J."/>
            <person name="Cebula T.A."/>
        </authorList>
    </citation>
    <scope>NUCLEOTIDE SEQUENCE [LARGE SCALE GENOMIC DNA]</scope>
    <source>
        <strain>CT_02021853</strain>
    </source>
</reference>
<protein>
    <recommendedName>
        <fullName evidence="1">LexA repressor</fullName>
        <ecNumber evidence="1">3.4.21.88</ecNumber>
    </recommendedName>
</protein>
<accession>B5FQR1</accession>
<comment type="function">
    <text evidence="1">Represses a number of genes involved in the response to DNA damage (SOS response), including recA and lexA. Binds to the 16 bp palindromic sequence 5'-CTGTATATATATACAG-3'. In the presence of single-stranded DNA, RecA interacts with LexA causing an autocatalytic cleavage which disrupts the DNA-binding part of LexA, leading to derepression of the SOS regulon and eventually DNA repair.</text>
</comment>
<comment type="catalytic activity">
    <reaction evidence="1">
        <text>Hydrolysis of Ala-|-Gly bond in repressor LexA.</text>
        <dbReference type="EC" id="3.4.21.88"/>
    </reaction>
</comment>
<comment type="subunit">
    <text evidence="1">Homodimer.</text>
</comment>
<comment type="similarity">
    <text evidence="1">Belongs to the peptidase S24 family.</text>
</comment>
<gene>
    <name evidence="1" type="primary">lexA</name>
    <name type="ordered locus">SeD_A4631</name>
</gene>
<feature type="chain" id="PRO_1000089591" description="LexA repressor">
    <location>
        <begin position="1"/>
        <end position="202"/>
    </location>
</feature>
<feature type="DNA-binding region" description="H-T-H motif" evidence="1">
    <location>
        <begin position="28"/>
        <end position="48"/>
    </location>
</feature>
<feature type="active site" description="For autocatalytic cleavage activity" evidence="1">
    <location>
        <position position="119"/>
    </location>
</feature>
<feature type="active site" description="For autocatalytic cleavage activity" evidence="1">
    <location>
        <position position="156"/>
    </location>
</feature>
<feature type="site" description="Cleavage; by autolysis" evidence="1">
    <location>
        <begin position="84"/>
        <end position="85"/>
    </location>
</feature>
<evidence type="ECO:0000255" key="1">
    <source>
        <dbReference type="HAMAP-Rule" id="MF_00015"/>
    </source>
</evidence>
<name>LEXA_SALDC</name>
<sequence>MKALTARQQEVFDLIRDHISQTGMPPTRAEIAQRLGFRSPNAAEEHLKALARKGVLEIVSGASRGIRLLQEEEDGLPLVGRVAAGEPLLAQQHIEGHYQVDPSLFKPSADFLLRVSGMSMKDIGIMDGDLLAVHKTQDVRNGQVVVARIDDEVTVKRLKKQGNKVELLPENSEFTPIVVDLREQSFTIEGLAVGVIRNGEWL</sequence>